<proteinExistence type="inferred from homology"/>
<gene>
    <name type="ordered locus">DP1369</name>
</gene>
<name>PDRP_DESPS</name>
<comment type="function">
    <text evidence="1">Bifunctional serine/threonine kinase and phosphorylase involved in the regulation of the pyruvate, phosphate dikinase (PPDK) by catalyzing its phosphorylation/dephosphorylation.</text>
</comment>
<comment type="catalytic activity">
    <reaction evidence="1">
        <text>N(tele)-phospho-L-histidyl/L-threonyl-[pyruvate, phosphate dikinase] + ADP = N(tele)-phospho-L-histidyl/O-phospho-L-threonyl-[pyruvate, phosphate dikinase] + AMP + H(+)</text>
        <dbReference type="Rhea" id="RHEA:43692"/>
        <dbReference type="Rhea" id="RHEA-COMP:10650"/>
        <dbReference type="Rhea" id="RHEA-COMP:10651"/>
        <dbReference type="ChEBI" id="CHEBI:15378"/>
        <dbReference type="ChEBI" id="CHEBI:30013"/>
        <dbReference type="ChEBI" id="CHEBI:61977"/>
        <dbReference type="ChEBI" id="CHEBI:83586"/>
        <dbReference type="ChEBI" id="CHEBI:456215"/>
        <dbReference type="ChEBI" id="CHEBI:456216"/>
        <dbReference type="EC" id="2.7.11.32"/>
    </reaction>
</comment>
<comment type="catalytic activity">
    <reaction evidence="1">
        <text>N(tele)-phospho-L-histidyl/O-phospho-L-threonyl-[pyruvate, phosphate dikinase] + phosphate + H(+) = N(tele)-phospho-L-histidyl/L-threonyl-[pyruvate, phosphate dikinase] + diphosphate</text>
        <dbReference type="Rhea" id="RHEA:43696"/>
        <dbReference type="Rhea" id="RHEA-COMP:10650"/>
        <dbReference type="Rhea" id="RHEA-COMP:10651"/>
        <dbReference type="ChEBI" id="CHEBI:15378"/>
        <dbReference type="ChEBI" id="CHEBI:30013"/>
        <dbReference type="ChEBI" id="CHEBI:33019"/>
        <dbReference type="ChEBI" id="CHEBI:43474"/>
        <dbReference type="ChEBI" id="CHEBI:61977"/>
        <dbReference type="ChEBI" id="CHEBI:83586"/>
        <dbReference type="EC" id="2.7.4.27"/>
    </reaction>
</comment>
<comment type="similarity">
    <text evidence="1">Belongs to the pyruvate, phosphate/water dikinase regulatory protein family. PDRP subfamily.</text>
</comment>
<feature type="chain" id="PRO_0000196650" description="Putative pyruvate, phosphate dikinase regulatory protein">
    <location>
        <begin position="1"/>
        <end position="283"/>
    </location>
</feature>
<feature type="binding site" evidence="1">
    <location>
        <begin position="156"/>
        <end position="163"/>
    </location>
    <ligand>
        <name>ADP</name>
        <dbReference type="ChEBI" id="CHEBI:456216"/>
    </ligand>
</feature>
<keyword id="KW-0418">Kinase</keyword>
<keyword id="KW-0547">Nucleotide-binding</keyword>
<keyword id="KW-1185">Reference proteome</keyword>
<keyword id="KW-0723">Serine/threonine-protein kinase</keyword>
<keyword id="KW-0808">Transferase</keyword>
<sequence length="283" mass="32080">MMDQTVSNNFKMIYIASCGEGINAFHLVESTLVQFPDSDITVVKVPHIRTESQVDHLLDRVKDVESLIAHTIVEPNLRQYLVTKAEEHKIVTIDLMGQVLNKIETFLSIRPLGKPGLYRETHQVDLKQVTAIDFALAHDDGLRPESLDEAEIILVGLSRAGKTPLSMYMGVMGWKVANIPYVPGVPMPQTLDEVDRRRVIALNINIEQLLSHRKMRQESLGTSDMHAYSRRQEVEVEVQTAQKYYITKGFSMIDVSNKPIETSAEEIAEMITRRFKAQAHLKD</sequence>
<reference key="1">
    <citation type="journal article" date="2004" name="Environ. Microbiol.">
        <title>The genome of Desulfotalea psychrophila, a sulfate-reducing bacterium from permanently cold Arctic sediments.</title>
        <authorList>
            <person name="Rabus R."/>
            <person name="Ruepp A."/>
            <person name="Frickey T."/>
            <person name="Rattei T."/>
            <person name="Fartmann B."/>
            <person name="Stark M."/>
            <person name="Bauer M."/>
            <person name="Zibat A."/>
            <person name="Lombardot T."/>
            <person name="Becker I."/>
            <person name="Amann J."/>
            <person name="Gellner K."/>
            <person name="Teeling H."/>
            <person name="Leuschner W.D."/>
            <person name="Gloeckner F.-O."/>
            <person name="Lupas A.N."/>
            <person name="Amann R."/>
            <person name="Klenk H.-P."/>
        </authorList>
    </citation>
    <scope>NUCLEOTIDE SEQUENCE [LARGE SCALE GENOMIC DNA]</scope>
    <source>
        <strain>DSM 12343 / LSv54</strain>
    </source>
</reference>
<accession>Q6ANH6</accession>
<dbReference type="EC" id="2.7.11.32" evidence="1"/>
<dbReference type="EC" id="2.7.4.27" evidence="1"/>
<dbReference type="EMBL" id="CR522870">
    <property type="protein sequence ID" value="CAG36098.1"/>
    <property type="molecule type" value="Genomic_DNA"/>
</dbReference>
<dbReference type="RefSeq" id="WP_011188610.1">
    <property type="nucleotide sequence ID" value="NC_006138.1"/>
</dbReference>
<dbReference type="SMR" id="Q6ANH6"/>
<dbReference type="STRING" id="177439.DP1369"/>
<dbReference type="DNASU" id="2944540"/>
<dbReference type="KEGG" id="dps:DP1369"/>
<dbReference type="eggNOG" id="COG1806">
    <property type="taxonomic scope" value="Bacteria"/>
</dbReference>
<dbReference type="HOGENOM" id="CLU_046206_2_1_7"/>
<dbReference type="OrthoDB" id="9782201at2"/>
<dbReference type="Proteomes" id="UP000000602">
    <property type="component" value="Chromosome"/>
</dbReference>
<dbReference type="GO" id="GO:0043531">
    <property type="term" value="F:ADP binding"/>
    <property type="evidence" value="ECO:0007669"/>
    <property type="project" value="UniProtKB-UniRule"/>
</dbReference>
<dbReference type="GO" id="GO:0005524">
    <property type="term" value="F:ATP binding"/>
    <property type="evidence" value="ECO:0007669"/>
    <property type="project" value="InterPro"/>
</dbReference>
<dbReference type="GO" id="GO:0016776">
    <property type="term" value="F:phosphotransferase activity, phosphate group as acceptor"/>
    <property type="evidence" value="ECO:0007669"/>
    <property type="project" value="UniProtKB-UniRule"/>
</dbReference>
<dbReference type="GO" id="GO:0004674">
    <property type="term" value="F:protein serine/threonine kinase activity"/>
    <property type="evidence" value="ECO:0007669"/>
    <property type="project" value="UniProtKB-UniRule"/>
</dbReference>
<dbReference type="HAMAP" id="MF_00921">
    <property type="entry name" value="PDRP"/>
    <property type="match status" value="1"/>
</dbReference>
<dbReference type="InterPro" id="IPR005177">
    <property type="entry name" value="Kinase-pyrophosphorylase"/>
</dbReference>
<dbReference type="InterPro" id="IPR026565">
    <property type="entry name" value="PPDK_reg"/>
</dbReference>
<dbReference type="NCBIfam" id="NF003742">
    <property type="entry name" value="PRK05339.1"/>
    <property type="match status" value="1"/>
</dbReference>
<dbReference type="PANTHER" id="PTHR31756">
    <property type="entry name" value="PYRUVATE, PHOSPHATE DIKINASE REGULATORY PROTEIN 1, CHLOROPLASTIC"/>
    <property type="match status" value="1"/>
</dbReference>
<dbReference type="PANTHER" id="PTHR31756:SF3">
    <property type="entry name" value="PYRUVATE, PHOSPHATE DIKINASE REGULATORY PROTEIN 1, CHLOROPLASTIC"/>
    <property type="match status" value="1"/>
</dbReference>
<dbReference type="Pfam" id="PF03618">
    <property type="entry name" value="Kinase-PPPase"/>
    <property type="match status" value="1"/>
</dbReference>
<protein>
    <recommendedName>
        <fullName evidence="1">Putative pyruvate, phosphate dikinase regulatory protein</fullName>
        <shortName evidence="1">PPDK regulatory protein</shortName>
        <ecNumber evidence="1">2.7.11.32</ecNumber>
        <ecNumber evidence="1">2.7.4.27</ecNumber>
    </recommendedName>
</protein>
<organism>
    <name type="scientific">Desulfotalea psychrophila (strain LSv54 / DSM 12343)</name>
    <dbReference type="NCBI Taxonomy" id="177439"/>
    <lineage>
        <taxon>Bacteria</taxon>
        <taxon>Pseudomonadati</taxon>
        <taxon>Thermodesulfobacteriota</taxon>
        <taxon>Desulfobulbia</taxon>
        <taxon>Desulfobulbales</taxon>
        <taxon>Desulfocapsaceae</taxon>
        <taxon>Desulfotalea</taxon>
    </lineage>
</organism>
<evidence type="ECO:0000255" key="1">
    <source>
        <dbReference type="HAMAP-Rule" id="MF_00921"/>
    </source>
</evidence>